<reference key="1">
    <citation type="submission" date="2001-04" db="EMBL/GenBank/DDBJ databases">
        <title>Characterization of Lactobacillus acidophilus dnaK.</title>
        <authorList>
            <person name="Aoyama K."/>
            <person name="Uenishi H."/>
            <person name="Nakajima H."/>
        </authorList>
    </citation>
    <scope>NUCLEOTIDE SEQUENCE [GENOMIC DNA]</scope>
    <source>
        <strain>SBT2062</strain>
    </source>
</reference>
<reference key="2">
    <citation type="journal article" date="2005" name="Proc. Natl. Acad. Sci. U.S.A.">
        <title>Complete genome sequence of the probiotic lactic acid bacterium Lactobacillus acidophilus NCFM.</title>
        <authorList>
            <person name="Altermann E."/>
            <person name="Russell W.M."/>
            <person name="Azcarate-Peril M.A."/>
            <person name="Barrangou R."/>
            <person name="Buck B.L."/>
            <person name="McAuliffe O."/>
            <person name="Souther N."/>
            <person name="Dobson A."/>
            <person name="Duong T."/>
            <person name="Callanan M."/>
            <person name="Lick S."/>
            <person name="Hamrick A."/>
            <person name="Cano R."/>
            <person name="Klaenhammer T.R."/>
        </authorList>
    </citation>
    <scope>NUCLEOTIDE SEQUENCE [LARGE SCALE GENOMIC DNA]</scope>
    <source>
        <strain>ATCC 700396 / NCK56 / N2 / NCFM</strain>
    </source>
</reference>
<protein>
    <recommendedName>
        <fullName evidence="1">Heat-inducible transcription repressor HrcA</fullName>
    </recommendedName>
</protein>
<feature type="chain" id="PRO_0000182485" description="Heat-inducible transcription repressor HrcA">
    <location>
        <begin position="1"/>
        <end position="349"/>
    </location>
</feature>
<name>HRCA_LACAC</name>
<keyword id="KW-1185">Reference proteome</keyword>
<keyword id="KW-0678">Repressor</keyword>
<keyword id="KW-0346">Stress response</keyword>
<keyword id="KW-0804">Transcription</keyword>
<keyword id="KW-0805">Transcription regulation</keyword>
<comment type="function">
    <text evidence="1">Negative regulator of class I heat shock genes (grpE-dnaK-dnaJ and groELS operons). Prevents heat-shock induction of these operons.</text>
</comment>
<comment type="similarity">
    <text evidence="1">Belongs to the HrcA family.</text>
</comment>
<gene>
    <name evidence="1" type="primary">hrcA</name>
    <name type="ordered locus">LBA1249</name>
</gene>
<organism>
    <name type="scientific">Lactobacillus acidophilus (strain ATCC 700396 / NCK56 / N2 / NCFM)</name>
    <dbReference type="NCBI Taxonomy" id="272621"/>
    <lineage>
        <taxon>Bacteria</taxon>
        <taxon>Bacillati</taxon>
        <taxon>Bacillota</taxon>
        <taxon>Bacilli</taxon>
        <taxon>Lactobacillales</taxon>
        <taxon>Lactobacillaceae</taxon>
        <taxon>Lactobacillus</taxon>
    </lineage>
</organism>
<proteinExistence type="inferred from homology"/>
<sequence length="349" mass="39180">MLTERQELILKTIIMDFTQTHEPVGSKTVMNQLPIKVSSATIRNEMAVLEDQGLIEKTHSSSGRIPSSEGYRYYLDNLVEPLKLPESVYNTIGSQLDRPFHQVNEIVQEAARILSDLTNYTAFAEGPEKRDVKVTGFRIVPLSSRQVMAILVTSDGNVQNQVYALPHNIYGEEIEKAVHMINDQLVGKSLNEINVSLLSELAKSELGGEHVTELLSLVEDVLKDAASEQMYVDGQINLLNNTSEHNVKDIRSLYELIDHDNLFSNLMDSKADSKDKNYPIKVKLGSELPNDLLKNYSLLTAEYNVGSHGKGTIALLGPTNMPYSQMIGLLEYFRNELAKKLLDYYGKFQ</sequence>
<dbReference type="EMBL" id="AB059359">
    <property type="protein sequence ID" value="BAC66858.1"/>
    <property type="molecule type" value="Genomic_DNA"/>
</dbReference>
<dbReference type="EMBL" id="CP000033">
    <property type="protein sequence ID" value="AAV43082.1"/>
    <property type="molecule type" value="Genomic_DNA"/>
</dbReference>
<dbReference type="RefSeq" id="WP_003547794.1">
    <property type="nucleotide sequence ID" value="NC_006814.3"/>
</dbReference>
<dbReference type="RefSeq" id="YP_194113.1">
    <property type="nucleotide sequence ID" value="NC_006814.3"/>
</dbReference>
<dbReference type="SMR" id="Q84BU6"/>
<dbReference type="STRING" id="272621.LBA1249"/>
<dbReference type="GeneID" id="93289660"/>
<dbReference type="KEGG" id="lac:LBA1249"/>
<dbReference type="PATRIC" id="fig|272621.13.peg.1184"/>
<dbReference type="eggNOG" id="COG1420">
    <property type="taxonomic scope" value="Bacteria"/>
</dbReference>
<dbReference type="HOGENOM" id="CLU_050019_1_0_9"/>
<dbReference type="OrthoDB" id="9783139at2"/>
<dbReference type="BioCyc" id="LACI272621:G1G49-1232-MONOMER"/>
<dbReference type="Proteomes" id="UP000006381">
    <property type="component" value="Chromosome"/>
</dbReference>
<dbReference type="GO" id="GO:0003677">
    <property type="term" value="F:DNA binding"/>
    <property type="evidence" value="ECO:0007669"/>
    <property type="project" value="InterPro"/>
</dbReference>
<dbReference type="GO" id="GO:0045892">
    <property type="term" value="P:negative regulation of DNA-templated transcription"/>
    <property type="evidence" value="ECO:0007669"/>
    <property type="project" value="UniProtKB-UniRule"/>
</dbReference>
<dbReference type="Gene3D" id="3.30.450.40">
    <property type="match status" value="1"/>
</dbReference>
<dbReference type="Gene3D" id="3.30.390.60">
    <property type="entry name" value="Heat-inducible transcription repressor hrca homolog, domain 3"/>
    <property type="match status" value="1"/>
</dbReference>
<dbReference type="Gene3D" id="1.10.10.10">
    <property type="entry name" value="Winged helix-like DNA-binding domain superfamily/Winged helix DNA-binding domain"/>
    <property type="match status" value="1"/>
</dbReference>
<dbReference type="HAMAP" id="MF_00081">
    <property type="entry name" value="HrcA"/>
    <property type="match status" value="1"/>
</dbReference>
<dbReference type="InterPro" id="IPR029016">
    <property type="entry name" value="GAF-like_dom_sf"/>
</dbReference>
<dbReference type="InterPro" id="IPR002571">
    <property type="entry name" value="HrcA"/>
</dbReference>
<dbReference type="InterPro" id="IPR021153">
    <property type="entry name" value="HrcA_C"/>
</dbReference>
<dbReference type="InterPro" id="IPR036388">
    <property type="entry name" value="WH-like_DNA-bd_sf"/>
</dbReference>
<dbReference type="InterPro" id="IPR036390">
    <property type="entry name" value="WH_DNA-bd_sf"/>
</dbReference>
<dbReference type="InterPro" id="IPR005104">
    <property type="entry name" value="WHTH_HrcA_DNA-bd"/>
</dbReference>
<dbReference type="InterPro" id="IPR023120">
    <property type="entry name" value="WHTH_transcript_rep_HrcA_IDD"/>
</dbReference>
<dbReference type="NCBIfam" id="TIGR00331">
    <property type="entry name" value="hrcA"/>
    <property type="match status" value="1"/>
</dbReference>
<dbReference type="PANTHER" id="PTHR34824">
    <property type="entry name" value="HEAT-INDUCIBLE TRANSCRIPTION REPRESSOR HRCA"/>
    <property type="match status" value="1"/>
</dbReference>
<dbReference type="PANTHER" id="PTHR34824:SF1">
    <property type="entry name" value="HEAT-INDUCIBLE TRANSCRIPTION REPRESSOR HRCA"/>
    <property type="match status" value="1"/>
</dbReference>
<dbReference type="Pfam" id="PF01628">
    <property type="entry name" value="HrcA"/>
    <property type="match status" value="1"/>
</dbReference>
<dbReference type="Pfam" id="PF03444">
    <property type="entry name" value="HrcA_DNA-bdg"/>
    <property type="match status" value="1"/>
</dbReference>
<dbReference type="PIRSF" id="PIRSF005485">
    <property type="entry name" value="HrcA"/>
    <property type="match status" value="1"/>
</dbReference>
<dbReference type="SUPFAM" id="SSF55781">
    <property type="entry name" value="GAF domain-like"/>
    <property type="match status" value="1"/>
</dbReference>
<dbReference type="SUPFAM" id="SSF46785">
    <property type="entry name" value="Winged helix' DNA-binding domain"/>
    <property type="match status" value="1"/>
</dbReference>
<accession>Q84BU6</accession>
<accession>Q5FJP2</accession>
<evidence type="ECO:0000255" key="1">
    <source>
        <dbReference type="HAMAP-Rule" id="MF_00081"/>
    </source>
</evidence>